<feature type="chain" id="PRO_0000180741" description="Glucose-6-phosphate isomerase">
    <location>
        <begin position="1"/>
        <end position="449"/>
    </location>
</feature>
<feature type="active site" description="Proton donor" evidence="1">
    <location>
        <position position="291"/>
    </location>
</feature>
<feature type="active site" evidence="1">
    <location>
        <position position="312"/>
    </location>
</feature>
<feature type="active site" evidence="1">
    <location>
        <position position="426"/>
    </location>
</feature>
<name>G6PI_STRP8</name>
<evidence type="ECO:0000255" key="1">
    <source>
        <dbReference type="HAMAP-Rule" id="MF_00473"/>
    </source>
</evidence>
<organism>
    <name type="scientific">Streptococcus pyogenes serotype M18 (strain MGAS8232)</name>
    <dbReference type="NCBI Taxonomy" id="186103"/>
    <lineage>
        <taxon>Bacteria</taxon>
        <taxon>Bacillati</taxon>
        <taxon>Bacillota</taxon>
        <taxon>Bacilli</taxon>
        <taxon>Lactobacillales</taxon>
        <taxon>Streptococcaceae</taxon>
        <taxon>Streptococcus</taxon>
    </lineage>
</organism>
<proteinExistence type="inferred from homology"/>
<gene>
    <name evidence="1" type="primary">pgi</name>
    <name type="ordered locus">spyM18_0204</name>
</gene>
<dbReference type="EC" id="5.3.1.9" evidence="1"/>
<dbReference type="EMBL" id="AE009949">
    <property type="protein sequence ID" value="AAL96997.1"/>
    <property type="molecule type" value="Genomic_DNA"/>
</dbReference>
<dbReference type="RefSeq" id="WP_011017303.1">
    <property type="nucleotide sequence ID" value="NC_003485.1"/>
</dbReference>
<dbReference type="SMR" id="Q8P2R3"/>
<dbReference type="KEGG" id="spm:spyM18_0204"/>
<dbReference type="HOGENOM" id="CLU_037303_0_1_9"/>
<dbReference type="UniPathway" id="UPA00109">
    <property type="reaction ID" value="UER00181"/>
</dbReference>
<dbReference type="UniPathway" id="UPA00138"/>
<dbReference type="GO" id="GO:0005829">
    <property type="term" value="C:cytosol"/>
    <property type="evidence" value="ECO:0007669"/>
    <property type="project" value="TreeGrafter"/>
</dbReference>
<dbReference type="GO" id="GO:0097367">
    <property type="term" value="F:carbohydrate derivative binding"/>
    <property type="evidence" value="ECO:0007669"/>
    <property type="project" value="InterPro"/>
</dbReference>
<dbReference type="GO" id="GO:0004347">
    <property type="term" value="F:glucose-6-phosphate isomerase activity"/>
    <property type="evidence" value="ECO:0007669"/>
    <property type="project" value="UniProtKB-UniRule"/>
</dbReference>
<dbReference type="GO" id="GO:0048029">
    <property type="term" value="F:monosaccharide binding"/>
    <property type="evidence" value="ECO:0007669"/>
    <property type="project" value="TreeGrafter"/>
</dbReference>
<dbReference type="GO" id="GO:0006094">
    <property type="term" value="P:gluconeogenesis"/>
    <property type="evidence" value="ECO:0007669"/>
    <property type="project" value="UniProtKB-UniRule"/>
</dbReference>
<dbReference type="GO" id="GO:0051156">
    <property type="term" value="P:glucose 6-phosphate metabolic process"/>
    <property type="evidence" value="ECO:0007669"/>
    <property type="project" value="TreeGrafter"/>
</dbReference>
<dbReference type="GO" id="GO:0006096">
    <property type="term" value="P:glycolytic process"/>
    <property type="evidence" value="ECO:0007669"/>
    <property type="project" value="UniProtKB-UniRule"/>
</dbReference>
<dbReference type="CDD" id="cd05015">
    <property type="entry name" value="SIS_PGI_1"/>
    <property type="match status" value="1"/>
</dbReference>
<dbReference type="CDD" id="cd05016">
    <property type="entry name" value="SIS_PGI_2"/>
    <property type="match status" value="1"/>
</dbReference>
<dbReference type="FunFam" id="3.40.50.10490:FF:000015">
    <property type="entry name" value="Glucose-6-phosphate isomerase"/>
    <property type="match status" value="1"/>
</dbReference>
<dbReference type="FunFam" id="3.40.50.10490:FF:000016">
    <property type="entry name" value="Glucose-6-phosphate isomerase"/>
    <property type="match status" value="1"/>
</dbReference>
<dbReference type="Gene3D" id="3.40.50.10490">
    <property type="entry name" value="Glucose-6-phosphate isomerase like protein, domain 1"/>
    <property type="match status" value="2"/>
</dbReference>
<dbReference type="HAMAP" id="MF_00473">
    <property type="entry name" value="G6P_isomerase"/>
    <property type="match status" value="1"/>
</dbReference>
<dbReference type="InterPro" id="IPR001672">
    <property type="entry name" value="G6P_Isomerase"/>
</dbReference>
<dbReference type="InterPro" id="IPR018189">
    <property type="entry name" value="Phosphoglucose_isomerase_CS"/>
</dbReference>
<dbReference type="InterPro" id="IPR046348">
    <property type="entry name" value="SIS_dom_sf"/>
</dbReference>
<dbReference type="InterPro" id="IPR035476">
    <property type="entry name" value="SIS_PGI_1"/>
</dbReference>
<dbReference type="InterPro" id="IPR035482">
    <property type="entry name" value="SIS_PGI_2"/>
</dbReference>
<dbReference type="NCBIfam" id="NF010697">
    <property type="entry name" value="PRK14097.1"/>
    <property type="match status" value="1"/>
</dbReference>
<dbReference type="PANTHER" id="PTHR11469">
    <property type="entry name" value="GLUCOSE-6-PHOSPHATE ISOMERASE"/>
    <property type="match status" value="1"/>
</dbReference>
<dbReference type="PANTHER" id="PTHR11469:SF1">
    <property type="entry name" value="GLUCOSE-6-PHOSPHATE ISOMERASE"/>
    <property type="match status" value="1"/>
</dbReference>
<dbReference type="Pfam" id="PF00342">
    <property type="entry name" value="PGI"/>
    <property type="match status" value="1"/>
</dbReference>
<dbReference type="PRINTS" id="PR00662">
    <property type="entry name" value="G6PISOMERASE"/>
</dbReference>
<dbReference type="SUPFAM" id="SSF53697">
    <property type="entry name" value="SIS domain"/>
    <property type="match status" value="1"/>
</dbReference>
<dbReference type="PROSITE" id="PS00765">
    <property type="entry name" value="P_GLUCOSE_ISOMERASE_1"/>
    <property type="match status" value="1"/>
</dbReference>
<dbReference type="PROSITE" id="PS00174">
    <property type="entry name" value="P_GLUCOSE_ISOMERASE_2"/>
    <property type="match status" value="1"/>
</dbReference>
<dbReference type="PROSITE" id="PS51463">
    <property type="entry name" value="P_GLUCOSE_ISOMERASE_3"/>
    <property type="match status" value="1"/>
</dbReference>
<accession>Q8P2R3</accession>
<reference key="1">
    <citation type="journal article" date="2002" name="Proc. Natl. Acad. Sci. U.S.A.">
        <title>Genome sequence and comparative microarray analysis of serotype M18 group A Streptococcus strains associated with acute rheumatic fever outbreaks.</title>
        <authorList>
            <person name="Smoot J.C."/>
            <person name="Barbian K.D."/>
            <person name="Van Gompel J.J."/>
            <person name="Smoot L.M."/>
            <person name="Chaussee M.S."/>
            <person name="Sylva G.L."/>
            <person name="Sturdevant D.E."/>
            <person name="Ricklefs S.M."/>
            <person name="Porcella S.F."/>
            <person name="Parkins L.D."/>
            <person name="Beres S.B."/>
            <person name="Campbell D.S."/>
            <person name="Smith T.M."/>
            <person name="Zhang Q."/>
            <person name="Kapur V."/>
            <person name="Daly J.A."/>
            <person name="Veasy L.G."/>
            <person name="Musser J.M."/>
        </authorList>
    </citation>
    <scope>NUCLEOTIDE SEQUENCE [LARGE SCALE GENOMIC DNA]</scope>
    <source>
        <strain>MGAS8232</strain>
    </source>
</reference>
<keyword id="KW-0963">Cytoplasm</keyword>
<keyword id="KW-0312">Gluconeogenesis</keyword>
<keyword id="KW-0324">Glycolysis</keyword>
<keyword id="KW-0413">Isomerase</keyword>
<protein>
    <recommendedName>
        <fullName evidence="1">Glucose-6-phosphate isomerase</fullName>
        <shortName evidence="1">GPI</shortName>
        <ecNumber evidence="1">5.3.1.9</ecNumber>
    </recommendedName>
    <alternativeName>
        <fullName evidence="1">Phosphoglucose isomerase</fullName>
        <shortName evidence="1">PGI</shortName>
    </alternativeName>
    <alternativeName>
        <fullName evidence="1">Phosphohexose isomerase</fullName>
        <shortName evidence="1">PHI</shortName>
    </alternativeName>
</protein>
<sequence>MSHITFDYSKVLESFAGQHEIDFLQGQVTEADKLLREGTGPGSDFLGWLDLPENYDKEEFARILTAAEKIKSDSEVLVVIGIGGSYLGAKAAIDFLNHHFANLQTAKERKAPQILYAGNSISSTYLADLVEYVQDKEFSVNVISKSGTTTEPAIAFRVFKELLVKKYGQEEANKRIYATTDKVKGAVKVEADANNWETFVVPDNVGGRFSVLTAVGLLPIAASGADITALMEGANAARKDLSSDKISENIAYQYAAVRNVLYRKGYITEILANYEPSLQYFGEWWKQLAGESEGKDQKGIYPTSANFSTDLHSLGQFIQEGYRNLFETVIRVDNPRKNVIIPELAEDLDGLGYLQGKDVDFVNKKATDGVLLAHTDGGVPNMFVTLPVQDEFTLGYTIYFFELAIAVSGYMNAVNPFDQPGVEAYKRNMFALLGKPGFEALSAELNARL</sequence>
<comment type="function">
    <text evidence="1">Catalyzes the reversible isomerization of glucose-6-phosphate to fructose-6-phosphate.</text>
</comment>
<comment type="catalytic activity">
    <reaction evidence="1">
        <text>alpha-D-glucose 6-phosphate = beta-D-fructose 6-phosphate</text>
        <dbReference type="Rhea" id="RHEA:11816"/>
        <dbReference type="ChEBI" id="CHEBI:57634"/>
        <dbReference type="ChEBI" id="CHEBI:58225"/>
        <dbReference type="EC" id="5.3.1.9"/>
    </reaction>
</comment>
<comment type="pathway">
    <text evidence="1">Carbohydrate biosynthesis; gluconeogenesis.</text>
</comment>
<comment type="pathway">
    <text evidence="1">Carbohydrate degradation; glycolysis; D-glyceraldehyde 3-phosphate and glycerone phosphate from D-glucose: step 2/4.</text>
</comment>
<comment type="subcellular location">
    <subcellularLocation>
        <location evidence="1">Cytoplasm</location>
    </subcellularLocation>
</comment>
<comment type="similarity">
    <text evidence="1">Belongs to the GPI family.</text>
</comment>